<proteinExistence type="evidence at protein level"/>
<sequence length="30" mass="3181">GIPCAESCVYIPCITAALGCSCKNKVCYRN</sequence>
<feature type="peptide" id="PRO_0000441355" description="Cyclotide mden-G" evidence="2">
    <location>
        <begin position="1"/>
        <end position="30"/>
    </location>
</feature>
<feature type="disulfide bond" evidence="1">
    <location>
        <begin position="4"/>
        <end position="20"/>
    </location>
</feature>
<feature type="disulfide bond" evidence="1">
    <location>
        <begin position="8"/>
        <end position="22"/>
    </location>
</feature>
<feature type="disulfide bond" evidence="1">
    <location>
        <begin position="13"/>
        <end position="27"/>
    </location>
</feature>
<feature type="cross-link" description="Cyclopeptide (Gly-Asn)" evidence="3">
    <location>
        <begin position="1"/>
        <end position="30"/>
    </location>
</feature>
<organism evidence="3">
    <name type="scientific">Melicytus dentatus</name>
    <name type="common">Tree violet</name>
    <dbReference type="NCBI Taxonomy" id="491106"/>
    <lineage>
        <taxon>Eukaryota</taxon>
        <taxon>Viridiplantae</taxon>
        <taxon>Streptophyta</taxon>
        <taxon>Embryophyta</taxon>
        <taxon>Tracheophyta</taxon>
        <taxon>Spermatophyta</taxon>
        <taxon>Magnoliopsida</taxon>
        <taxon>eudicotyledons</taxon>
        <taxon>Gunneridae</taxon>
        <taxon>Pentapetalae</taxon>
        <taxon>rosids</taxon>
        <taxon>fabids</taxon>
        <taxon>Malpighiales</taxon>
        <taxon>Violaceae</taxon>
        <taxon>Melicytus</taxon>
    </lineage>
</organism>
<protein>
    <recommendedName>
        <fullName evidence="3">Cyclotide mden-G</fullName>
    </recommendedName>
</protein>
<accession>C0HKI9</accession>
<reference evidence="4" key="1">
    <citation type="journal article" date="2017" name="J. Nat. Prod.">
        <title>Understanding the Diversity and Distribution of Cyclotides from Plants of Varied Genetic Origin.</title>
        <authorList>
            <person name="Ravipati A.S."/>
            <person name="Poth A.G."/>
            <person name="Troeira Henriques S."/>
            <person name="Bhandari M."/>
            <person name="Huang Y.H."/>
            <person name="Nino J."/>
            <person name="Colgrave M.L."/>
            <person name="Craik D.J."/>
        </authorList>
    </citation>
    <scope>PROTEIN SEQUENCE</scope>
</reference>
<evidence type="ECO:0000255" key="1">
    <source>
        <dbReference type="PROSITE-ProRule" id="PRU00395"/>
    </source>
</evidence>
<evidence type="ECO:0000269" key="2">
    <source>
    </source>
</evidence>
<evidence type="ECO:0000303" key="3">
    <source>
    </source>
</evidence>
<evidence type="ECO:0000305" key="4"/>
<name>CYMEG_MELDN</name>
<keyword id="KW-0903">Direct protein sequencing</keyword>
<keyword id="KW-1015">Disulfide bond</keyword>
<keyword id="KW-0611">Plant defense</keyword>
<comment type="function">
    <text evidence="1">Probably participates in a plant defense mechanism.</text>
</comment>
<comment type="domain">
    <text evidence="4">The presence of a 'disulfide through disulfide knot' structurally defines this protein as a knottin.</text>
</comment>
<comment type="PTM">
    <text evidence="1">This is a cyclic peptide.</text>
</comment>
<comment type="similarity">
    <text evidence="1">Belongs to the cyclotide family. Bracelet subfamily.</text>
</comment>
<comment type="caution">
    <text evidence="1">This peptide is cyclic. The start position was chosen by similarity to Oak1 (kalata B1) for which the DNA sequence is known.</text>
</comment>
<dbReference type="SMR" id="C0HKI9"/>
<dbReference type="GO" id="GO:0006952">
    <property type="term" value="P:defense response"/>
    <property type="evidence" value="ECO:0007669"/>
    <property type="project" value="UniProtKB-KW"/>
</dbReference>
<dbReference type="InterPro" id="IPR005535">
    <property type="entry name" value="Cyclotide"/>
</dbReference>
<dbReference type="InterPro" id="IPR012323">
    <property type="entry name" value="Cyclotide_bracelet_CS"/>
</dbReference>
<dbReference type="InterPro" id="IPR036146">
    <property type="entry name" value="Cyclotide_sf"/>
</dbReference>
<dbReference type="Pfam" id="PF03784">
    <property type="entry name" value="Cyclotide"/>
    <property type="match status" value="1"/>
</dbReference>
<dbReference type="PIRSF" id="PIRSF037891">
    <property type="entry name" value="Cycloviolacin"/>
    <property type="match status" value="1"/>
</dbReference>
<dbReference type="SUPFAM" id="SSF57038">
    <property type="entry name" value="Cyclotides"/>
    <property type="match status" value="1"/>
</dbReference>
<dbReference type="PROSITE" id="PS51052">
    <property type="entry name" value="CYCLOTIDE"/>
    <property type="match status" value="1"/>
</dbReference>
<dbReference type="PROSITE" id="PS60008">
    <property type="entry name" value="CYCLOTIDE_BRACELET"/>
    <property type="match status" value="1"/>
</dbReference>